<organism>
    <name type="scientific">Prochlorococcus marinus (strain MIT 9312)</name>
    <dbReference type="NCBI Taxonomy" id="74546"/>
    <lineage>
        <taxon>Bacteria</taxon>
        <taxon>Bacillati</taxon>
        <taxon>Cyanobacteriota</taxon>
        <taxon>Cyanophyceae</taxon>
        <taxon>Synechococcales</taxon>
        <taxon>Prochlorococcaceae</taxon>
        <taxon>Prochlorococcus</taxon>
    </lineage>
</organism>
<reference key="1">
    <citation type="journal article" date="2006" name="Science">
        <title>Genomic islands and the ecology and evolution of Prochlorococcus.</title>
        <authorList>
            <person name="Coleman M.L."/>
            <person name="Sullivan M.B."/>
            <person name="Martiny A.C."/>
            <person name="Steglich C."/>
            <person name="Barry K."/>
            <person name="Delong E.F."/>
            <person name="Chisholm S.W."/>
        </authorList>
    </citation>
    <scope>NUCLEOTIDE SEQUENCE [LARGE SCALE GENOMIC DNA]</scope>
    <source>
        <strain>MIT 9312</strain>
    </source>
</reference>
<gene>
    <name evidence="1" type="primary">hemE</name>
    <name type="ordered locus">PMT9312_0583</name>
</gene>
<comment type="function">
    <text evidence="1">Catalyzes the decarboxylation of four acetate groups of uroporphyrinogen-III to yield coproporphyrinogen-III.</text>
</comment>
<comment type="catalytic activity">
    <reaction evidence="1">
        <text>uroporphyrinogen III + 4 H(+) = coproporphyrinogen III + 4 CO2</text>
        <dbReference type="Rhea" id="RHEA:19865"/>
        <dbReference type="ChEBI" id="CHEBI:15378"/>
        <dbReference type="ChEBI" id="CHEBI:16526"/>
        <dbReference type="ChEBI" id="CHEBI:57308"/>
        <dbReference type="ChEBI" id="CHEBI:57309"/>
        <dbReference type="EC" id="4.1.1.37"/>
    </reaction>
</comment>
<comment type="pathway">
    <text evidence="1">Porphyrin-containing compound metabolism; protoporphyrin-IX biosynthesis; coproporphyrinogen-III from 5-aminolevulinate: step 4/4.</text>
</comment>
<comment type="subunit">
    <text evidence="1">Homodimer.</text>
</comment>
<comment type="subcellular location">
    <subcellularLocation>
        <location evidence="1">Cytoplasm</location>
    </subcellularLocation>
</comment>
<comment type="similarity">
    <text evidence="1">Belongs to the uroporphyrinogen decarboxylase family.</text>
</comment>
<name>DCUP_PROM9</name>
<accession>Q31BV1</accession>
<proteinExistence type="inferred from homology"/>
<sequence>MGENLPLLLSAALGKKVTRPPVWMMRQAGRYMKIYRDLRERYPSFRERSENPELSYEISMQPFHAFKPDGVILFSDILTPLPGMGINFEIIESKGPIIEDPIRTLSQIESLKELNPSESLSFVGQVLSSLKKDVNNEATVLGFVGAPWTLAAYVVEGKSSKNYSLIKSMAFKEPDLLHKLLDHFAKSIGEYLKFQIKSGAQVVQIFDSWAGQLSPQDYDIFAGPYQKKVVDIVKEEYPDTPVILYISGSAGVIERMAKTGVDIISLDWTVDIEEACKRIPDEIGIQGNVDPGILFGNKESIKERIDDTFNKIKDRKYILNLGHGILPGTPEENAQTFFEHGKKLTY</sequence>
<evidence type="ECO:0000255" key="1">
    <source>
        <dbReference type="HAMAP-Rule" id="MF_00218"/>
    </source>
</evidence>
<dbReference type="EC" id="4.1.1.37" evidence="1"/>
<dbReference type="EMBL" id="CP000111">
    <property type="protein sequence ID" value="ABB49644.1"/>
    <property type="molecule type" value="Genomic_DNA"/>
</dbReference>
<dbReference type="RefSeq" id="WP_011376139.1">
    <property type="nucleotide sequence ID" value="NC_007577.1"/>
</dbReference>
<dbReference type="SMR" id="Q31BV1"/>
<dbReference type="STRING" id="74546.PMT9312_0583"/>
<dbReference type="KEGG" id="pmi:PMT9312_0583"/>
<dbReference type="eggNOG" id="COG0407">
    <property type="taxonomic scope" value="Bacteria"/>
</dbReference>
<dbReference type="HOGENOM" id="CLU_040933_0_2_3"/>
<dbReference type="OrthoDB" id="9806656at2"/>
<dbReference type="UniPathway" id="UPA00251">
    <property type="reaction ID" value="UER00321"/>
</dbReference>
<dbReference type="Proteomes" id="UP000002715">
    <property type="component" value="Chromosome"/>
</dbReference>
<dbReference type="GO" id="GO:0005737">
    <property type="term" value="C:cytoplasm"/>
    <property type="evidence" value="ECO:0007669"/>
    <property type="project" value="UniProtKB-SubCell"/>
</dbReference>
<dbReference type="GO" id="GO:0004853">
    <property type="term" value="F:uroporphyrinogen decarboxylase activity"/>
    <property type="evidence" value="ECO:0007669"/>
    <property type="project" value="UniProtKB-UniRule"/>
</dbReference>
<dbReference type="GO" id="GO:0006782">
    <property type="term" value="P:protoporphyrinogen IX biosynthetic process"/>
    <property type="evidence" value="ECO:0007669"/>
    <property type="project" value="UniProtKB-UniRule"/>
</dbReference>
<dbReference type="CDD" id="cd00717">
    <property type="entry name" value="URO-D"/>
    <property type="match status" value="1"/>
</dbReference>
<dbReference type="FunFam" id="3.20.20.210:FF:000006">
    <property type="entry name" value="Uroporphyrinogen decarboxylase"/>
    <property type="match status" value="1"/>
</dbReference>
<dbReference type="Gene3D" id="3.20.20.210">
    <property type="match status" value="1"/>
</dbReference>
<dbReference type="HAMAP" id="MF_00218">
    <property type="entry name" value="URO_D"/>
    <property type="match status" value="1"/>
</dbReference>
<dbReference type="InterPro" id="IPR038071">
    <property type="entry name" value="UROD/MetE-like_sf"/>
</dbReference>
<dbReference type="InterPro" id="IPR006361">
    <property type="entry name" value="Uroporphyrinogen_deCO2ase_HemE"/>
</dbReference>
<dbReference type="InterPro" id="IPR000257">
    <property type="entry name" value="Uroporphyrinogen_deCOase"/>
</dbReference>
<dbReference type="NCBIfam" id="TIGR01464">
    <property type="entry name" value="hemE"/>
    <property type="match status" value="1"/>
</dbReference>
<dbReference type="PANTHER" id="PTHR21091">
    <property type="entry name" value="METHYLTETRAHYDROFOLATE:HOMOCYSTEINE METHYLTRANSFERASE RELATED"/>
    <property type="match status" value="1"/>
</dbReference>
<dbReference type="PANTHER" id="PTHR21091:SF169">
    <property type="entry name" value="UROPORPHYRINOGEN DECARBOXYLASE"/>
    <property type="match status" value="1"/>
</dbReference>
<dbReference type="Pfam" id="PF01208">
    <property type="entry name" value="URO-D"/>
    <property type="match status" value="1"/>
</dbReference>
<dbReference type="SUPFAM" id="SSF51726">
    <property type="entry name" value="UROD/MetE-like"/>
    <property type="match status" value="1"/>
</dbReference>
<dbReference type="PROSITE" id="PS00906">
    <property type="entry name" value="UROD_1"/>
    <property type="match status" value="1"/>
</dbReference>
<dbReference type="PROSITE" id="PS00907">
    <property type="entry name" value="UROD_2"/>
    <property type="match status" value="1"/>
</dbReference>
<feature type="chain" id="PRO_1000023940" description="Uroporphyrinogen decarboxylase">
    <location>
        <begin position="1"/>
        <end position="346"/>
    </location>
</feature>
<feature type="binding site" evidence="1">
    <location>
        <begin position="26"/>
        <end position="30"/>
    </location>
    <ligand>
        <name>substrate</name>
    </ligand>
</feature>
<feature type="binding site" evidence="1">
    <location>
        <position position="76"/>
    </location>
    <ligand>
        <name>substrate</name>
    </ligand>
</feature>
<feature type="binding site" evidence="1">
    <location>
        <position position="153"/>
    </location>
    <ligand>
        <name>substrate</name>
    </ligand>
</feature>
<feature type="binding site" evidence="1">
    <location>
        <position position="208"/>
    </location>
    <ligand>
        <name>substrate</name>
    </ligand>
</feature>
<feature type="binding site" evidence="1">
    <location>
        <position position="323"/>
    </location>
    <ligand>
        <name>substrate</name>
    </ligand>
</feature>
<feature type="site" description="Transition state stabilizer" evidence="1">
    <location>
        <position position="76"/>
    </location>
</feature>
<protein>
    <recommendedName>
        <fullName evidence="1">Uroporphyrinogen decarboxylase</fullName>
        <shortName evidence="1">UPD</shortName>
        <shortName evidence="1">URO-D</shortName>
        <ecNumber evidence="1">4.1.1.37</ecNumber>
    </recommendedName>
</protein>
<keyword id="KW-0963">Cytoplasm</keyword>
<keyword id="KW-0210">Decarboxylase</keyword>
<keyword id="KW-0456">Lyase</keyword>
<keyword id="KW-0627">Porphyrin biosynthesis</keyword>